<comment type="function">
    <text evidence="1">Participates in chromosomal partition during cell division. May act via the formation of a condensin-like complex containing Smc and ScpA that pull DNA away from mid-cell into both cell halves.</text>
</comment>
<comment type="subunit">
    <text evidence="1">Homodimer. Homodimerization may be required to stabilize the binding of ScpA to the Smc head domains. Component of a cohesin-like complex composed of ScpA, ScpB and the Smc homodimer, in which ScpA and ScpB bind to the head domain of Smc. The presence of the three proteins is required for the association of the complex with DNA.</text>
</comment>
<comment type="subcellular location">
    <subcellularLocation>
        <location evidence="1">Cytoplasm</location>
    </subcellularLocation>
    <text evidence="1">Associated with two foci at the outer edges of the nucleoid region in young cells, and at four foci within both cell halves in older cells.</text>
</comment>
<comment type="similarity">
    <text evidence="1">Belongs to the ScpB family.</text>
</comment>
<sequence>MDRKEQKSIIEGLLFVSGDEGIYPEQIAKVLEIEMNEAINILEEMQQECEGANRGLQIVQYAKVYRFATKKEHASYYQKLIDTPTAASLSQAALETLAIVAYRQPITRTEMEEIRGVKTDKALQTLVSHLLIKEMGRAEGPGRPILYGTTKEFLDTFGLKTLDDLPPLSEENEQMNEADLFFGSLQEISK</sequence>
<dbReference type="EMBL" id="CP001176">
    <property type="protein sequence ID" value="ACK60987.1"/>
    <property type="molecule type" value="Genomic_DNA"/>
</dbReference>
<dbReference type="RefSeq" id="WP_000375168.1">
    <property type="nucleotide sequence ID" value="NZ_VEHB01000002.1"/>
</dbReference>
<dbReference type="SMR" id="B7H948"/>
<dbReference type="KEGG" id="bcb:BCB4264_A4166"/>
<dbReference type="HOGENOM" id="CLU_045647_5_3_9"/>
<dbReference type="Proteomes" id="UP000007096">
    <property type="component" value="Chromosome"/>
</dbReference>
<dbReference type="GO" id="GO:0005737">
    <property type="term" value="C:cytoplasm"/>
    <property type="evidence" value="ECO:0007669"/>
    <property type="project" value="UniProtKB-SubCell"/>
</dbReference>
<dbReference type="GO" id="GO:0051301">
    <property type="term" value="P:cell division"/>
    <property type="evidence" value="ECO:0007669"/>
    <property type="project" value="UniProtKB-KW"/>
</dbReference>
<dbReference type="GO" id="GO:0051304">
    <property type="term" value="P:chromosome separation"/>
    <property type="evidence" value="ECO:0007669"/>
    <property type="project" value="InterPro"/>
</dbReference>
<dbReference type="GO" id="GO:0006260">
    <property type="term" value="P:DNA replication"/>
    <property type="evidence" value="ECO:0007669"/>
    <property type="project" value="UniProtKB-UniRule"/>
</dbReference>
<dbReference type="Gene3D" id="1.10.10.10">
    <property type="entry name" value="Winged helix-like DNA-binding domain superfamily/Winged helix DNA-binding domain"/>
    <property type="match status" value="2"/>
</dbReference>
<dbReference type="HAMAP" id="MF_01804">
    <property type="entry name" value="ScpB"/>
    <property type="match status" value="1"/>
</dbReference>
<dbReference type="InterPro" id="IPR005234">
    <property type="entry name" value="ScpB_csome_segregation"/>
</dbReference>
<dbReference type="InterPro" id="IPR036388">
    <property type="entry name" value="WH-like_DNA-bd_sf"/>
</dbReference>
<dbReference type="InterPro" id="IPR036390">
    <property type="entry name" value="WH_DNA-bd_sf"/>
</dbReference>
<dbReference type="NCBIfam" id="TIGR00281">
    <property type="entry name" value="SMC-Scp complex subunit ScpB"/>
    <property type="match status" value="1"/>
</dbReference>
<dbReference type="PANTHER" id="PTHR34298">
    <property type="entry name" value="SEGREGATION AND CONDENSATION PROTEIN B"/>
    <property type="match status" value="1"/>
</dbReference>
<dbReference type="PANTHER" id="PTHR34298:SF2">
    <property type="entry name" value="SEGREGATION AND CONDENSATION PROTEIN B"/>
    <property type="match status" value="1"/>
</dbReference>
<dbReference type="Pfam" id="PF04079">
    <property type="entry name" value="SMC_ScpB"/>
    <property type="match status" value="1"/>
</dbReference>
<dbReference type="PIRSF" id="PIRSF019345">
    <property type="entry name" value="ScpB"/>
    <property type="match status" value="1"/>
</dbReference>
<dbReference type="SUPFAM" id="SSF46785">
    <property type="entry name" value="Winged helix' DNA-binding domain"/>
    <property type="match status" value="2"/>
</dbReference>
<organism>
    <name type="scientific">Bacillus cereus (strain B4264)</name>
    <dbReference type="NCBI Taxonomy" id="405532"/>
    <lineage>
        <taxon>Bacteria</taxon>
        <taxon>Bacillati</taxon>
        <taxon>Bacillota</taxon>
        <taxon>Bacilli</taxon>
        <taxon>Bacillales</taxon>
        <taxon>Bacillaceae</taxon>
        <taxon>Bacillus</taxon>
        <taxon>Bacillus cereus group</taxon>
    </lineage>
</organism>
<reference key="1">
    <citation type="submission" date="2008-10" db="EMBL/GenBank/DDBJ databases">
        <title>Genome sequence of Bacillus cereus B4264.</title>
        <authorList>
            <person name="Dodson R.J."/>
            <person name="Durkin A.S."/>
            <person name="Rosovitz M.J."/>
            <person name="Rasko D.A."/>
            <person name="Hoffmaster A."/>
            <person name="Ravel J."/>
            <person name="Sutton G."/>
        </authorList>
    </citation>
    <scope>NUCLEOTIDE SEQUENCE [LARGE SCALE GENOMIC DNA]</scope>
    <source>
        <strain>B4264</strain>
    </source>
</reference>
<name>SCPB_BACC4</name>
<protein>
    <recommendedName>
        <fullName evidence="1">Segregation and condensation protein B</fullName>
    </recommendedName>
</protein>
<feature type="chain" id="PRO_1000187529" description="Segregation and condensation protein B">
    <location>
        <begin position="1"/>
        <end position="190"/>
    </location>
</feature>
<evidence type="ECO:0000255" key="1">
    <source>
        <dbReference type="HAMAP-Rule" id="MF_01804"/>
    </source>
</evidence>
<keyword id="KW-0131">Cell cycle</keyword>
<keyword id="KW-0132">Cell division</keyword>
<keyword id="KW-0159">Chromosome partition</keyword>
<keyword id="KW-0963">Cytoplasm</keyword>
<accession>B7H948</accession>
<proteinExistence type="inferred from homology"/>
<gene>
    <name evidence="1" type="primary">scpB</name>
    <name type="ordered locus">BCB4264_A4166</name>
</gene>